<gene>
    <name evidence="1" type="primary">ligA</name>
    <name type="ordered locus">MHJ_0258</name>
</gene>
<keyword id="KW-0227">DNA damage</keyword>
<keyword id="KW-0234">DNA repair</keyword>
<keyword id="KW-0235">DNA replication</keyword>
<keyword id="KW-0436">Ligase</keyword>
<keyword id="KW-0460">Magnesium</keyword>
<keyword id="KW-0464">Manganese</keyword>
<keyword id="KW-0479">Metal-binding</keyword>
<keyword id="KW-0520">NAD</keyword>
<keyword id="KW-0862">Zinc</keyword>
<comment type="function">
    <text evidence="1">DNA ligase that catalyzes the formation of phosphodiester linkages between 5'-phosphoryl and 3'-hydroxyl groups in double-stranded DNA using NAD as a coenzyme and as the energy source for the reaction. It is essential for DNA replication and repair of damaged DNA.</text>
</comment>
<comment type="catalytic activity">
    <reaction evidence="1">
        <text>NAD(+) + (deoxyribonucleotide)n-3'-hydroxyl + 5'-phospho-(deoxyribonucleotide)m = (deoxyribonucleotide)n+m + AMP + beta-nicotinamide D-nucleotide.</text>
        <dbReference type="EC" id="6.5.1.2"/>
    </reaction>
</comment>
<comment type="cofactor">
    <cofactor evidence="1">
        <name>Mg(2+)</name>
        <dbReference type="ChEBI" id="CHEBI:18420"/>
    </cofactor>
    <cofactor evidence="1">
        <name>Mn(2+)</name>
        <dbReference type="ChEBI" id="CHEBI:29035"/>
    </cofactor>
</comment>
<comment type="similarity">
    <text evidence="1">Belongs to the NAD-dependent DNA ligase family. LigA subfamily.</text>
</comment>
<name>DNLJ_MESHJ</name>
<feature type="chain" id="PRO_0000313323" description="DNA ligase">
    <location>
        <begin position="1"/>
        <end position="692"/>
    </location>
</feature>
<feature type="domain" description="BRCT" evidence="1">
    <location>
        <begin position="611"/>
        <end position="692"/>
    </location>
</feature>
<feature type="active site" description="N6-AMP-lysine intermediate" evidence="1">
    <location>
        <position position="119"/>
    </location>
</feature>
<feature type="binding site" evidence="1">
    <location>
        <begin position="35"/>
        <end position="39"/>
    </location>
    <ligand>
        <name>NAD(+)</name>
        <dbReference type="ChEBI" id="CHEBI:57540"/>
    </ligand>
</feature>
<feature type="binding site" evidence="1">
    <location>
        <begin position="88"/>
        <end position="89"/>
    </location>
    <ligand>
        <name>NAD(+)</name>
        <dbReference type="ChEBI" id="CHEBI:57540"/>
    </ligand>
</feature>
<feature type="binding site" evidence="1">
    <location>
        <position position="117"/>
    </location>
    <ligand>
        <name>NAD(+)</name>
        <dbReference type="ChEBI" id="CHEBI:57540"/>
    </ligand>
</feature>
<feature type="binding site" evidence="1">
    <location>
        <position position="140"/>
    </location>
    <ligand>
        <name>NAD(+)</name>
        <dbReference type="ChEBI" id="CHEBI:57540"/>
    </ligand>
</feature>
<feature type="binding site" evidence="1">
    <location>
        <position position="176"/>
    </location>
    <ligand>
        <name>NAD(+)</name>
        <dbReference type="ChEBI" id="CHEBI:57540"/>
    </ligand>
</feature>
<feature type="binding site" evidence="1">
    <location>
        <position position="301"/>
    </location>
    <ligand>
        <name>NAD(+)</name>
        <dbReference type="ChEBI" id="CHEBI:57540"/>
    </ligand>
</feature>
<feature type="binding site" evidence="1">
    <location>
        <position position="325"/>
    </location>
    <ligand>
        <name>NAD(+)</name>
        <dbReference type="ChEBI" id="CHEBI:57540"/>
    </ligand>
</feature>
<feature type="binding site" evidence="1">
    <location>
        <position position="416"/>
    </location>
    <ligand>
        <name>Zn(2+)</name>
        <dbReference type="ChEBI" id="CHEBI:29105"/>
    </ligand>
</feature>
<feature type="binding site" evidence="1">
    <location>
        <position position="419"/>
    </location>
    <ligand>
        <name>Zn(2+)</name>
        <dbReference type="ChEBI" id="CHEBI:29105"/>
    </ligand>
</feature>
<feature type="binding site" evidence="1">
    <location>
        <position position="434"/>
    </location>
    <ligand>
        <name>Zn(2+)</name>
        <dbReference type="ChEBI" id="CHEBI:29105"/>
    </ligand>
</feature>
<feature type="binding site" evidence="1">
    <location>
        <position position="439"/>
    </location>
    <ligand>
        <name>Zn(2+)</name>
        <dbReference type="ChEBI" id="CHEBI:29105"/>
    </ligand>
</feature>
<reference key="1">
    <citation type="journal article" date="2005" name="J. Bacteriol.">
        <title>Swine and poultry pathogens: the complete genome sequences of two strains of Mycoplasma hyopneumoniae and a strain of Mycoplasma synoviae.</title>
        <authorList>
            <person name="Vasconcelos A.T.R."/>
            <person name="Ferreira H.B."/>
            <person name="Bizarro C.V."/>
            <person name="Bonatto S.L."/>
            <person name="Carvalho M.O."/>
            <person name="Pinto P.M."/>
            <person name="Almeida D.F."/>
            <person name="Almeida L.G.P."/>
            <person name="Almeida R."/>
            <person name="Alves-Junior L."/>
            <person name="Assuncao E.N."/>
            <person name="Azevedo V.A.C."/>
            <person name="Bogo M.R."/>
            <person name="Brigido M.M."/>
            <person name="Brocchi M."/>
            <person name="Burity H.A."/>
            <person name="Camargo A.A."/>
            <person name="Camargo S.S."/>
            <person name="Carepo M.S."/>
            <person name="Carraro D.M."/>
            <person name="de Mattos Cascardo J.C."/>
            <person name="Castro L.A."/>
            <person name="Cavalcanti G."/>
            <person name="Chemale G."/>
            <person name="Collevatti R.G."/>
            <person name="Cunha C.W."/>
            <person name="Dallagiovanna B."/>
            <person name="Dambros B.P."/>
            <person name="Dellagostin O.A."/>
            <person name="Falcao C."/>
            <person name="Fantinatti-Garboggini F."/>
            <person name="Felipe M.S.S."/>
            <person name="Fiorentin L."/>
            <person name="Franco G.R."/>
            <person name="Freitas N.S.A."/>
            <person name="Frias D."/>
            <person name="Grangeiro T.B."/>
            <person name="Grisard E.C."/>
            <person name="Guimaraes C.T."/>
            <person name="Hungria M."/>
            <person name="Jardim S.N."/>
            <person name="Krieger M.A."/>
            <person name="Laurino J.P."/>
            <person name="Lima L.F.A."/>
            <person name="Lopes M.I."/>
            <person name="Loreto E.L.S."/>
            <person name="Madeira H.M.F."/>
            <person name="Manfio G.P."/>
            <person name="Maranhao A.Q."/>
            <person name="Martinkovics C.T."/>
            <person name="Medeiros S.R.B."/>
            <person name="Moreira M.A.M."/>
            <person name="Neiva M."/>
            <person name="Ramalho-Neto C.E."/>
            <person name="Nicolas M.F."/>
            <person name="Oliveira S.C."/>
            <person name="Paixao R.F.C."/>
            <person name="Pedrosa F.O."/>
            <person name="Pena S.D.J."/>
            <person name="Pereira M."/>
            <person name="Pereira-Ferrari L."/>
            <person name="Piffer I."/>
            <person name="Pinto L.S."/>
            <person name="Potrich D.P."/>
            <person name="Salim A.C.M."/>
            <person name="Santos F.R."/>
            <person name="Schmitt R."/>
            <person name="Schneider M.P.C."/>
            <person name="Schrank A."/>
            <person name="Schrank I.S."/>
            <person name="Schuck A.F."/>
            <person name="Seuanez H.N."/>
            <person name="Silva D.W."/>
            <person name="Silva R."/>
            <person name="Silva S.C."/>
            <person name="Soares C.M.A."/>
            <person name="Souza K.R.L."/>
            <person name="Souza R.C."/>
            <person name="Staats C.C."/>
            <person name="Steffens M.B.R."/>
            <person name="Teixeira S.M.R."/>
            <person name="Urmenyi T.P."/>
            <person name="Vainstein M.H."/>
            <person name="Zuccherato L.W."/>
            <person name="Simpson A.J.G."/>
            <person name="Zaha A."/>
        </authorList>
    </citation>
    <scope>NUCLEOTIDE SEQUENCE [LARGE SCALE GENOMIC DNA]</scope>
    <source>
        <strain>J / ATCC 25934 / NCTC 10110</strain>
    </source>
</reference>
<evidence type="ECO:0000255" key="1">
    <source>
        <dbReference type="HAMAP-Rule" id="MF_01588"/>
    </source>
</evidence>
<accession>Q4AA72</accession>
<proteinExistence type="inferred from homology"/>
<dbReference type="EC" id="6.5.1.2" evidence="1"/>
<dbReference type="EMBL" id="AE017243">
    <property type="protein sequence ID" value="AAZ44349.2"/>
    <property type="molecule type" value="Genomic_DNA"/>
</dbReference>
<dbReference type="RefSeq" id="WP_044284616.1">
    <property type="nucleotide sequence ID" value="NC_007295.1"/>
</dbReference>
<dbReference type="SMR" id="Q4AA72"/>
<dbReference type="GeneID" id="41334564"/>
<dbReference type="KEGG" id="mhj:MHJ_0258"/>
<dbReference type="eggNOG" id="COG0272">
    <property type="taxonomic scope" value="Bacteria"/>
</dbReference>
<dbReference type="HOGENOM" id="CLU_007764_2_0_14"/>
<dbReference type="OrthoDB" id="9759736at2"/>
<dbReference type="Proteomes" id="UP000000548">
    <property type="component" value="Chromosome"/>
</dbReference>
<dbReference type="GO" id="GO:0003911">
    <property type="term" value="F:DNA ligase (NAD+) activity"/>
    <property type="evidence" value="ECO:0007669"/>
    <property type="project" value="UniProtKB-UniRule"/>
</dbReference>
<dbReference type="GO" id="GO:0046872">
    <property type="term" value="F:metal ion binding"/>
    <property type="evidence" value="ECO:0007669"/>
    <property type="project" value="UniProtKB-KW"/>
</dbReference>
<dbReference type="GO" id="GO:0006281">
    <property type="term" value="P:DNA repair"/>
    <property type="evidence" value="ECO:0007669"/>
    <property type="project" value="UniProtKB-KW"/>
</dbReference>
<dbReference type="GO" id="GO:0006260">
    <property type="term" value="P:DNA replication"/>
    <property type="evidence" value="ECO:0007669"/>
    <property type="project" value="UniProtKB-KW"/>
</dbReference>
<dbReference type="CDD" id="cd17748">
    <property type="entry name" value="BRCT_DNA_ligase_like"/>
    <property type="match status" value="1"/>
</dbReference>
<dbReference type="CDD" id="cd00114">
    <property type="entry name" value="LIGANc"/>
    <property type="match status" value="1"/>
</dbReference>
<dbReference type="Gene3D" id="1.10.150.20">
    <property type="entry name" value="5' to 3' exonuclease, C-terminal subdomain"/>
    <property type="match status" value="2"/>
</dbReference>
<dbReference type="Gene3D" id="3.40.50.10190">
    <property type="entry name" value="BRCT domain"/>
    <property type="match status" value="1"/>
</dbReference>
<dbReference type="Gene3D" id="3.30.470.30">
    <property type="entry name" value="DNA ligase/mRNA capping enzyme"/>
    <property type="match status" value="1"/>
</dbReference>
<dbReference type="Gene3D" id="1.10.287.610">
    <property type="entry name" value="Helix hairpin bin"/>
    <property type="match status" value="1"/>
</dbReference>
<dbReference type="Gene3D" id="2.40.50.140">
    <property type="entry name" value="Nucleic acid-binding proteins"/>
    <property type="match status" value="1"/>
</dbReference>
<dbReference type="HAMAP" id="MF_01588">
    <property type="entry name" value="DNA_ligase_A"/>
    <property type="match status" value="1"/>
</dbReference>
<dbReference type="InterPro" id="IPR001357">
    <property type="entry name" value="BRCT_dom"/>
</dbReference>
<dbReference type="InterPro" id="IPR036420">
    <property type="entry name" value="BRCT_dom_sf"/>
</dbReference>
<dbReference type="InterPro" id="IPR041663">
    <property type="entry name" value="DisA/LigA_HHH"/>
</dbReference>
<dbReference type="InterPro" id="IPR001679">
    <property type="entry name" value="DNA_ligase"/>
</dbReference>
<dbReference type="InterPro" id="IPR018239">
    <property type="entry name" value="DNA_ligase_AS"/>
</dbReference>
<dbReference type="InterPro" id="IPR013839">
    <property type="entry name" value="DNAligase_adenylation"/>
</dbReference>
<dbReference type="InterPro" id="IPR013840">
    <property type="entry name" value="DNAligase_N"/>
</dbReference>
<dbReference type="InterPro" id="IPR012340">
    <property type="entry name" value="NA-bd_OB-fold"/>
</dbReference>
<dbReference type="InterPro" id="IPR004150">
    <property type="entry name" value="NAD_DNA_ligase_OB"/>
</dbReference>
<dbReference type="InterPro" id="IPR010994">
    <property type="entry name" value="RuvA_2-like"/>
</dbReference>
<dbReference type="InterPro" id="IPR004149">
    <property type="entry name" value="Znf_DNAligase_C4"/>
</dbReference>
<dbReference type="NCBIfam" id="TIGR00575">
    <property type="entry name" value="dnlj"/>
    <property type="match status" value="1"/>
</dbReference>
<dbReference type="NCBIfam" id="NF005932">
    <property type="entry name" value="PRK07956.1"/>
    <property type="match status" value="1"/>
</dbReference>
<dbReference type="Pfam" id="PF00533">
    <property type="entry name" value="BRCT"/>
    <property type="match status" value="1"/>
</dbReference>
<dbReference type="Pfam" id="PF01653">
    <property type="entry name" value="DNA_ligase_aden"/>
    <property type="match status" value="1"/>
</dbReference>
<dbReference type="Pfam" id="PF03120">
    <property type="entry name" value="DNA_ligase_OB"/>
    <property type="match status" value="1"/>
</dbReference>
<dbReference type="Pfam" id="PF03119">
    <property type="entry name" value="DNA_ligase_ZBD"/>
    <property type="match status" value="1"/>
</dbReference>
<dbReference type="Pfam" id="PF12826">
    <property type="entry name" value="HHH_2"/>
    <property type="match status" value="1"/>
</dbReference>
<dbReference type="PIRSF" id="PIRSF001604">
    <property type="entry name" value="LigA"/>
    <property type="match status" value="1"/>
</dbReference>
<dbReference type="SMART" id="SM00292">
    <property type="entry name" value="BRCT"/>
    <property type="match status" value="1"/>
</dbReference>
<dbReference type="SMART" id="SM00532">
    <property type="entry name" value="LIGANc"/>
    <property type="match status" value="1"/>
</dbReference>
<dbReference type="SUPFAM" id="SSF52113">
    <property type="entry name" value="BRCT domain"/>
    <property type="match status" value="1"/>
</dbReference>
<dbReference type="SUPFAM" id="SSF56091">
    <property type="entry name" value="DNA ligase/mRNA capping enzyme, catalytic domain"/>
    <property type="match status" value="1"/>
</dbReference>
<dbReference type="SUPFAM" id="SSF50249">
    <property type="entry name" value="Nucleic acid-binding proteins"/>
    <property type="match status" value="1"/>
</dbReference>
<dbReference type="SUPFAM" id="SSF47781">
    <property type="entry name" value="RuvA domain 2-like"/>
    <property type="match status" value="1"/>
</dbReference>
<dbReference type="PROSITE" id="PS50172">
    <property type="entry name" value="BRCT"/>
    <property type="match status" value="1"/>
</dbReference>
<dbReference type="PROSITE" id="PS01055">
    <property type="entry name" value="DNA_LIGASE_N1"/>
    <property type="match status" value="1"/>
</dbReference>
<protein>
    <recommendedName>
        <fullName evidence="1">DNA ligase</fullName>
        <ecNumber evidence="1">6.5.1.2</ecNumber>
    </recommendedName>
    <alternativeName>
        <fullName evidence="1">Polydeoxyribonucleotide synthase [NAD(+)]</fullName>
    </alternativeName>
</protein>
<organism>
    <name type="scientific">Mesomycoplasma hyopneumoniae (strain J / ATCC 25934 / NCTC 10110)</name>
    <name type="common">Mycoplasma hyopneumoniae</name>
    <dbReference type="NCBI Taxonomy" id="262719"/>
    <lineage>
        <taxon>Bacteria</taxon>
        <taxon>Bacillati</taxon>
        <taxon>Mycoplasmatota</taxon>
        <taxon>Mycoplasmoidales</taxon>
        <taxon>Metamycoplasmataceae</taxon>
        <taxon>Mesomycoplasma</taxon>
    </lineage>
</organism>
<sequence length="692" mass="79413">MKKNSQIRAKIIELREKIEKWNHHYYQLQNPLVDDLVYDKTLRELEKLERENFFLFSLEELNQSPSQKVGSKITSKFEKVAHSSPMLSLNKAYSNEELEKWAKKASEILKTVTFFVEPKIDGIALSLFYQNGNLIKALTRGDGVFGENVLVNALKINDEFIPKKINYLEDLEVRGEIYIDNSTFASLQLETKKFKNPRNAASGILRRYKNHKPKIDAKSIKFLEEESDFRYLKSFFYTLVNPEKHKINSQFDSINFLRNLGFQVNPFQKKCSDLKDVFNFISIIKQKRDFLNYNIDGVVVKVNEFSIYEKLGSTSKFPHSAIAFKFEDDIAKTKLLAIFATIGRTGKVTYNAKIEPVTLAGSKISSAILPNYSYIENLKLNLNTEVYIKKAGEIIPQIIGSVHNYPKTNFSIVKNCPKCNSELVNSESGLDQFCQNQFCPEIILQKIVHFCSKNALNIESLAQKRIEKFLEKGLISSACDIFYLKDKLELIYERLSNKNQLLTKQNASQSMQIKSIMKLLNEVERAKNIDFYRLIFGLGIRNVGLKAAKILSRYASNLSELRNLDFNLLKNQHDFGPVIIESLIDYFNNQKNSEQLNCLETVGFNFKTTFLTNQSNSWASFAISGKLSKPRDEYVRIIEESGASFHESLTKKTDFLLLGQSAGSKIEKAKKAGIKIINEVQFFDLIKNSKKT</sequence>